<dbReference type="EMBL" id="CY015109">
    <property type="protein sequence ID" value="ABI85146.1"/>
    <property type="molecule type" value="Genomic_RNA"/>
</dbReference>
<dbReference type="SMR" id="Q0A2D5"/>
<dbReference type="Proteomes" id="UP000105783">
    <property type="component" value="Genome"/>
</dbReference>
<dbReference type="GO" id="GO:0042025">
    <property type="term" value="C:host cell nucleus"/>
    <property type="evidence" value="ECO:0007669"/>
    <property type="project" value="UniProtKB-SubCell"/>
</dbReference>
<dbReference type="GO" id="GO:0016020">
    <property type="term" value="C:membrane"/>
    <property type="evidence" value="ECO:0007669"/>
    <property type="project" value="UniProtKB-KW"/>
</dbReference>
<dbReference type="GO" id="GO:0055036">
    <property type="term" value="C:virion membrane"/>
    <property type="evidence" value="ECO:0007669"/>
    <property type="project" value="UniProtKB-SubCell"/>
</dbReference>
<dbReference type="GO" id="GO:0003723">
    <property type="term" value="F:RNA binding"/>
    <property type="evidence" value="ECO:0007669"/>
    <property type="project" value="UniProtKB-UniRule"/>
</dbReference>
<dbReference type="GO" id="GO:0039660">
    <property type="term" value="F:structural constituent of virion"/>
    <property type="evidence" value="ECO:0007669"/>
    <property type="project" value="UniProtKB-UniRule"/>
</dbReference>
<dbReference type="GO" id="GO:0046761">
    <property type="term" value="P:viral budding from plasma membrane"/>
    <property type="evidence" value="ECO:0007669"/>
    <property type="project" value="UniProtKB-UniRule"/>
</dbReference>
<dbReference type="FunFam" id="1.10.10.180:FF:000001">
    <property type="entry name" value="Matrix protein 1"/>
    <property type="match status" value="1"/>
</dbReference>
<dbReference type="FunFam" id="1.20.91.10:FF:000001">
    <property type="entry name" value="Matrix protein 1"/>
    <property type="match status" value="1"/>
</dbReference>
<dbReference type="Gene3D" id="1.10.10.180">
    <property type="match status" value="1"/>
</dbReference>
<dbReference type="Gene3D" id="1.20.91.10">
    <property type="match status" value="1"/>
</dbReference>
<dbReference type="HAMAP" id="MF_04068">
    <property type="entry name" value="INFV_M1"/>
    <property type="match status" value="1"/>
</dbReference>
<dbReference type="InterPro" id="IPR036039">
    <property type="entry name" value="Flu_matrix_M1"/>
</dbReference>
<dbReference type="InterPro" id="IPR013188">
    <property type="entry name" value="Flu_matrix_M1_C"/>
</dbReference>
<dbReference type="InterPro" id="IPR001561">
    <property type="entry name" value="Flu_matrix_M1_N"/>
</dbReference>
<dbReference type="InterPro" id="IPR015423">
    <property type="entry name" value="Flu_matrix_M1_N_sub1"/>
</dbReference>
<dbReference type="InterPro" id="IPR015799">
    <property type="entry name" value="Flu_matrix_M1_N_sub2"/>
</dbReference>
<dbReference type="InterPro" id="IPR037533">
    <property type="entry name" value="INFV_M1"/>
</dbReference>
<dbReference type="Pfam" id="PF00598">
    <property type="entry name" value="Flu_M1"/>
    <property type="match status" value="1"/>
</dbReference>
<dbReference type="Pfam" id="PF08289">
    <property type="entry name" value="Flu_M1_C"/>
    <property type="match status" value="1"/>
</dbReference>
<dbReference type="SMART" id="SM00759">
    <property type="entry name" value="Flu_M1_C"/>
    <property type="match status" value="1"/>
</dbReference>
<dbReference type="SUPFAM" id="SSF48145">
    <property type="entry name" value="Influenza virus matrix protein M1"/>
    <property type="match status" value="1"/>
</dbReference>
<organism>
    <name type="scientific">Influenza A virus (strain A/Chicken/Pennsylvania/1370/1983 H5N2)</name>
    <dbReference type="NCBI Taxonomy" id="385617"/>
    <lineage>
        <taxon>Viruses</taxon>
        <taxon>Riboviria</taxon>
        <taxon>Orthornavirae</taxon>
        <taxon>Negarnaviricota</taxon>
        <taxon>Polyploviricotina</taxon>
        <taxon>Insthoviricetes</taxon>
        <taxon>Articulavirales</taxon>
        <taxon>Orthomyxoviridae</taxon>
        <taxon>Alphainfluenzavirus</taxon>
        <taxon>Alphainfluenzavirus influenzae</taxon>
        <taxon>Influenza A virus</taxon>
    </lineage>
</organism>
<organismHost>
    <name type="scientific">Aves</name>
    <dbReference type="NCBI Taxonomy" id="8782"/>
</organismHost>
<protein>
    <recommendedName>
        <fullName evidence="1">Matrix protein 1</fullName>
        <shortName evidence="1">M1</shortName>
    </recommendedName>
</protein>
<keyword id="KW-0025">Alternative splicing</keyword>
<keyword id="KW-1048">Host nucleus</keyword>
<keyword id="KW-0472">Membrane</keyword>
<keyword id="KW-0694">RNA-binding</keyword>
<keyword id="KW-0468">Viral matrix protein</keyword>
<keyword id="KW-0946">Virion</keyword>
<accession>Q0A2D5</accession>
<reference key="1">
    <citation type="journal article" date="2006" name="Science">
        <title>Large-scale sequence analysis of avian influenza isolates.</title>
        <authorList>
            <person name="Obenauer J.C."/>
            <person name="Denson J."/>
            <person name="Mehta P.K."/>
            <person name="Su X."/>
            <person name="Mukatira S."/>
            <person name="Finkelstein D.B."/>
            <person name="Xu X."/>
            <person name="Wang J."/>
            <person name="Ma J."/>
            <person name="Fan Y."/>
            <person name="Rakestraw K.M."/>
            <person name="Webster R.G."/>
            <person name="Hoffmann E."/>
            <person name="Krauss S."/>
            <person name="Zheng J."/>
            <person name="Zhang Z."/>
            <person name="Naeve C.W."/>
        </authorList>
    </citation>
    <scope>NUCLEOTIDE SEQUENCE [GENOMIC RNA]</scope>
</reference>
<feature type="chain" id="PRO_0000326321" description="Matrix protein 1">
    <location>
        <begin position="1"/>
        <end position="252"/>
    </location>
</feature>
<feature type="region of interest" description="Membrane-binding" evidence="1">
    <location>
        <begin position="1"/>
        <end position="164"/>
    </location>
</feature>
<feature type="region of interest" description="RNP-binding" evidence="1">
    <location>
        <begin position="165"/>
        <end position="252"/>
    </location>
</feature>
<feature type="short sequence motif" description="Nuclear localization signal" evidence="1">
    <location>
        <begin position="101"/>
        <end position="105"/>
    </location>
</feature>
<evidence type="ECO:0000255" key="1">
    <source>
        <dbReference type="HAMAP-Rule" id="MF_04068"/>
    </source>
</evidence>
<name>M1_I83A6</name>
<sequence length="252" mass="27975">MSLLTEVETYVLSIVPSGPLKAEIAQRLEDVFAGKNTDLEVLMEWLKTRPILSPLTKGILGFVFTLTVPSERGLQRRRFVQNALNGNGDPNNMDRAVKLYRKLKREITFHGAKEVALSYSTGALASCMGLIYNRMGTVTTEVAFGLVCATCEQIADSQHRSHRQMVTTTNPLIRHENRMVLASTTAKAMEQMAGSSEQAAEAMEVASQARQMVHAMRTIGTHPSSSAGLRDDLLENLQAYQKRMGVQMQRFK</sequence>
<proteinExistence type="inferred from homology"/>
<gene>
    <name evidence="1" type="primary">M</name>
</gene>
<comment type="function">
    <text evidence="1">Plays critical roles in virus replication, from virus entry and uncoating to assembly and budding of the virus particle. M1 binding to ribonucleocapsids (RNPs) in nucleus seems to inhibit viral transcription. Interaction of viral NEP with M1-RNP is thought to promote nuclear export of the complex, which is targeted to the virion assembly site at the apical plasma membrane in polarized epithelial cells. Interactions with NA and HA may bring M1, a non-raft-associated protein, into lipid rafts. Forms a continuous shell on the inner side of the lipid bilayer in virion, where it binds the RNP. During virus entry into cell, the M2 ion channel acidifies the internal virion core, inducing M1 dissociation from the RNP. M1-free RNPs are transported to the nucleus, where viral transcription and replication can take place.</text>
</comment>
<comment type="function">
    <text evidence="1">Determines the virion's shape: spherical or filamentous. Clinical isolates of influenza are characterized by the presence of significant proportion of filamentous virions, whereas after multiple passage on eggs or cell culture, virions have only spherical morphology. Filamentous virions are thought to be important to infect neighboring cells, and spherical virions more suited to spread through aerosol between hosts organisms.</text>
</comment>
<comment type="subunit">
    <text evidence="1">Homodimer and homomultimer. Interacts with NEP. Binds ribonucleocapsid by both interacting with genomic RNA and NP protein. May interact with HA and NA. Cannot bind NP without genomic RNA.</text>
</comment>
<comment type="subcellular location">
    <subcellularLocation>
        <location evidence="1">Virion membrane</location>
        <topology evidence="1">Peripheral membrane protein</topology>
        <orientation evidence="1">Cytoplasmic side</orientation>
    </subcellularLocation>
    <subcellularLocation>
        <location evidence="1">Host nucleus</location>
    </subcellularLocation>
</comment>
<comment type="alternative products">
    <event type="alternative splicing"/>
    <isoform>
        <id>Q0A2D5-1</id>
        <name>M1</name>
        <sequence type="displayed"/>
    </isoform>
    <isoform>
        <id>Q0A2D6-1</id>
        <name>M2</name>
        <sequence type="external"/>
    </isoform>
    <text>Only the first 9 residues are shared by the 2 isoforms.</text>
</comment>
<comment type="miscellaneous">
    <text evidence="1">Most abundant protein in virion. When expressed alone can form virus-like particles in transfected cells.</text>
</comment>
<comment type="similarity">
    <text evidence="1">Belongs to the influenza viruses Matrix protein M1 family.</text>
</comment>